<gene>
    <name type="primary">ORF72</name>
</gene>
<dbReference type="EMBL" id="M75136">
    <property type="protein sequence ID" value="AAA88174.1"/>
    <property type="molecule type" value="Genomic_DNA"/>
</dbReference>
<dbReference type="PIR" id="G36793">
    <property type="entry name" value="G36793"/>
</dbReference>
<dbReference type="RefSeq" id="NP_041162.1">
    <property type="nucleotide sequence ID" value="NC_001493.2"/>
</dbReference>
<dbReference type="GeneID" id="1488396"/>
<dbReference type="KEGG" id="vg:1488396"/>
<dbReference type="Proteomes" id="UP000007643">
    <property type="component" value="Segment"/>
</dbReference>
<dbReference type="InterPro" id="IPR011009">
    <property type="entry name" value="Kinase-like_dom_sf"/>
</dbReference>
<dbReference type="SUPFAM" id="SSF56112">
    <property type="entry name" value="Protein kinase-like (PK-like)"/>
    <property type="match status" value="1"/>
</dbReference>
<organism>
    <name type="scientific">Ictalurid herpesvirus 1 (strain Auburn)</name>
    <name type="common">IcHV-1</name>
    <name type="synonym">Channel catfish herpesvirus</name>
    <dbReference type="NCBI Taxonomy" id="766178"/>
    <lineage>
        <taxon>Viruses</taxon>
        <taxon>Duplodnaviria</taxon>
        <taxon>Heunggongvirae</taxon>
        <taxon>Peploviricota</taxon>
        <taxon>Herviviricetes</taxon>
        <taxon>Herpesvirales</taxon>
        <taxon>Alloherpesviridae</taxon>
        <taxon>Ictavirus</taxon>
        <taxon>Ictavirus ictaluridallo1</taxon>
        <taxon>Ictalurid herpesvirus 1</taxon>
    </lineage>
</organism>
<evidence type="ECO:0000256" key="1">
    <source>
        <dbReference type="SAM" id="MobiDB-lite"/>
    </source>
</evidence>
<name>VG72_ICHVA</name>
<keyword id="KW-1185">Reference proteome</keyword>
<feature type="chain" id="PRO_0000222148" description="Uncharacterized protein ORF72">
    <location>
        <begin position="1"/>
        <end position="1350"/>
    </location>
</feature>
<feature type="region of interest" description="Disordered" evidence="1">
    <location>
        <begin position="348"/>
        <end position="371"/>
    </location>
</feature>
<feature type="region of interest" description="Disordered" evidence="1">
    <location>
        <begin position="923"/>
        <end position="944"/>
    </location>
</feature>
<feature type="compositionally biased region" description="Basic and acidic residues" evidence="1">
    <location>
        <begin position="923"/>
        <end position="932"/>
    </location>
</feature>
<sequence>MDGGMTVSDKGNWSFFGMASENKRPKWAAILSKAMGIQASFMTDQLRTAGPNPEGLISIHNSPDEALAVYSAHHTDGLNTCKICGHNVRDLKAHARQVHLGRLCKIENLAELGLAQTLRIDRDVEFAYIDGCYFWIGARAAPGLSRFFKPDATRCHRCPTVEWPDIENGESLEAVRLTGESPRLTDRARHLLAFHPGDFMASITTLISPKKSMNCEAIYSARGELQRFQLMWRGYGYKGERATAFPTKAVNEGFGTAVHEFLKMYDARTKALSVLPSDTKIYTVRFMEGEEPTTAVIPPGTHSVVPATTPAPEAPGKLNMSSPDLELIRRKGGKRVIEMVSGVAPSGSLVGAPSPSERVMKRKSERPLDDSSAVKRVSKKVTSVTDQECTAWESSIPGVSIERAPTIYTGKSAQTIAGVLTEGGVAPYPLIMDVDGERDLPIDLPNQIITGRVIESLGDLEGDIAARKEVIKKAVEALRVYSYRPLMQLSVIGIFFDEGWIYSVLEKPTGDLKTMSQTLRVLSTTGTFPWGGKSPAGTWKMAIVHHIFRDVVKLVALQNRLKVTPVFGKQDVYVWEHGLTIAPNSVEPRVDITGAQNLIISLLSQYTMFQHTTKLPIKPEVRATLSPDVLKLLDWPPRPPSSEVTEMAGRLGVMGDIGHPTIQFPLDFKIHMGSERVLRPDVLLIKPPKAAPSFYPSMEEVLRVLETPGPRSDESDEMVPASALISHATLAASQRGLVAAHASVGRAQAALSTRGGAFGATPSGEDATSALMKMIQELSNTSIPTSRSLLCELGLSSMRGPAVATPRPAEAPPSTSEGELFDVDAFLEKWTGPAPVEGTAPVPVEIPIVGDDIIRQSMALAGGECWELTETPSGNVVATGFTTPATPTIINPPSPHVFAVPMPPPANPGKRTKSVKRRIEAASKMEGGERDATGSSMDTVRGTGGLVTVKPQSLIRGDELGLMDKWVFEPALDTRTSSYLRGVHRTIVQRWLQNHGSMKPKMCRDPPTFAITDADVPILTTTPDATRRPICVDNNLPSTPMVFTWGDPNGSEPVPTEHRTSYELYRGDIQAAHQCNLYLGPSMEIYAYSPRVWIAQHTFDGANQIWGGFPPVIRYVYLNMMKIRPSKHIPYIYTVIEPHSVKGYKMNMYALITPMGHPVLTTGVAGYSKYLIKALVRTLHAVHSAGLKIGYMHPKNVWVKTDALGSDLQTYYIFDVVTQILENVFMPGSVGGRNAPVIPPEWTSKMTDNGPPLNLITEASDIFCLGRLLTVFCAQQDLTSEQVALIQLMCAAKPEERPCVTDLLVNFNVSPEEPFYPVDIGEMPVKITNTKKAERSNTAYVRFPVQGAQE</sequence>
<organismHost>
    <name type="scientific">Ictaluridae</name>
    <name type="common">bullhead catfishes</name>
    <dbReference type="NCBI Taxonomy" id="7996"/>
</organismHost>
<protein>
    <recommendedName>
        <fullName>Uncharacterized protein ORF72</fullName>
    </recommendedName>
</protein>
<proteinExistence type="predicted"/>
<reference key="1">
    <citation type="journal article" date="1992" name="Virology">
        <title>Channel catfish virus: a new type of herpesvirus.</title>
        <authorList>
            <person name="Davison A.J."/>
        </authorList>
    </citation>
    <scope>NUCLEOTIDE SEQUENCE [LARGE SCALE GENOMIC DNA]</scope>
</reference>
<accession>Q00103</accession>